<protein>
    <recommendedName>
        <fullName>Serine/arginine repetitive matrix protein 1</fullName>
    </recommendedName>
</protein>
<accession>Q5R5Q2</accession>
<keyword id="KW-0007">Acetylation</keyword>
<keyword id="KW-0164">Citrullination</keyword>
<keyword id="KW-0238">DNA-binding</keyword>
<keyword id="KW-1017">Isopeptide bond</keyword>
<keyword id="KW-0507">mRNA processing</keyword>
<keyword id="KW-0508">mRNA splicing</keyword>
<keyword id="KW-0597">Phosphoprotein</keyword>
<keyword id="KW-1185">Reference proteome</keyword>
<keyword id="KW-0694">RNA-binding</keyword>
<keyword id="KW-0747">Spliceosome</keyword>
<keyword id="KW-0832">Ubl conjugation</keyword>
<proteinExistence type="evidence at transcript level"/>
<name>SRRM1_PONAB</name>
<organism>
    <name type="scientific">Pongo abelii</name>
    <name type="common">Sumatran orangutan</name>
    <name type="synonym">Pongo pygmaeus abelii</name>
    <dbReference type="NCBI Taxonomy" id="9601"/>
    <lineage>
        <taxon>Eukaryota</taxon>
        <taxon>Metazoa</taxon>
        <taxon>Chordata</taxon>
        <taxon>Craniata</taxon>
        <taxon>Vertebrata</taxon>
        <taxon>Euteleostomi</taxon>
        <taxon>Mammalia</taxon>
        <taxon>Eutheria</taxon>
        <taxon>Euarchontoglires</taxon>
        <taxon>Primates</taxon>
        <taxon>Haplorrhini</taxon>
        <taxon>Catarrhini</taxon>
        <taxon>Hominidae</taxon>
        <taxon>Pongo</taxon>
    </lineage>
</organism>
<feature type="chain" id="PRO_0000076328" description="Serine/arginine repetitive matrix protein 1">
    <location>
        <begin position="1"/>
        <end position="917"/>
    </location>
</feature>
<feature type="domain" description="PWI" evidence="4">
    <location>
        <begin position="27"/>
        <end position="126"/>
    </location>
</feature>
<feature type="region of interest" description="Necessary for mRNA 3'-end cleavage and cytoplasmic accumulation" evidence="1">
    <location>
        <begin position="1"/>
        <end position="156"/>
    </location>
</feature>
<feature type="region of interest" description="Necessary for DNA and RNA-binding" evidence="1">
    <location>
        <begin position="1"/>
        <end position="151"/>
    </location>
</feature>
<feature type="region of interest" description="Disordered" evidence="5">
    <location>
        <begin position="139"/>
        <end position="917"/>
    </location>
</feature>
<feature type="region of interest" description="Necessary for speckles and matrix localization" evidence="1">
    <location>
        <begin position="300"/>
        <end position="702"/>
    </location>
</feature>
<feature type="compositionally biased region" description="Basic and acidic residues" evidence="5">
    <location>
        <begin position="139"/>
        <end position="170"/>
    </location>
</feature>
<feature type="compositionally biased region" description="Basic residues" evidence="5">
    <location>
        <begin position="171"/>
        <end position="207"/>
    </location>
</feature>
<feature type="compositionally biased region" description="Basic and acidic residues" evidence="5">
    <location>
        <begin position="214"/>
        <end position="234"/>
    </location>
</feature>
<feature type="compositionally biased region" description="Basic and acidic residues" evidence="5">
    <location>
        <begin position="246"/>
        <end position="275"/>
    </location>
</feature>
<feature type="compositionally biased region" description="Basic residues" evidence="5">
    <location>
        <begin position="276"/>
        <end position="329"/>
    </location>
</feature>
<feature type="compositionally biased region" description="Basic residues" evidence="5">
    <location>
        <begin position="336"/>
        <end position="351"/>
    </location>
</feature>
<feature type="compositionally biased region" description="Low complexity" evidence="5">
    <location>
        <begin position="352"/>
        <end position="368"/>
    </location>
</feature>
<feature type="compositionally biased region" description="Polar residues" evidence="5">
    <location>
        <begin position="428"/>
        <end position="438"/>
    </location>
</feature>
<feature type="compositionally biased region" description="Low complexity" evidence="5">
    <location>
        <begin position="478"/>
        <end position="501"/>
    </location>
</feature>
<feature type="compositionally biased region" description="Basic and acidic residues" evidence="5">
    <location>
        <begin position="503"/>
        <end position="518"/>
    </location>
</feature>
<feature type="compositionally biased region" description="Basic residues" evidence="5">
    <location>
        <begin position="557"/>
        <end position="574"/>
    </location>
</feature>
<feature type="compositionally biased region" description="Basic residues" evidence="5">
    <location>
        <begin position="581"/>
        <end position="606"/>
    </location>
</feature>
<feature type="compositionally biased region" description="Low complexity" evidence="5">
    <location>
        <begin position="607"/>
        <end position="619"/>
    </location>
</feature>
<feature type="compositionally biased region" description="Basic residues" evidence="5">
    <location>
        <begin position="635"/>
        <end position="650"/>
    </location>
</feature>
<feature type="compositionally biased region" description="Basic residues" evidence="5">
    <location>
        <begin position="663"/>
        <end position="677"/>
    </location>
</feature>
<feature type="compositionally biased region" description="Pro residues" evidence="5">
    <location>
        <begin position="699"/>
        <end position="713"/>
    </location>
</feature>
<feature type="compositionally biased region" description="Low complexity" evidence="5">
    <location>
        <begin position="714"/>
        <end position="732"/>
    </location>
</feature>
<feature type="compositionally biased region" description="Low complexity" evidence="5">
    <location>
        <begin position="749"/>
        <end position="772"/>
    </location>
</feature>
<feature type="compositionally biased region" description="Low complexity" evidence="5">
    <location>
        <begin position="782"/>
        <end position="799"/>
    </location>
</feature>
<feature type="compositionally biased region" description="Basic residues" evidence="5">
    <location>
        <begin position="822"/>
        <end position="847"/>
    </location>
</feature>
<feature type="compositionally biased region" description="Low complexity" evidence="5">
    <location>
        <begin position="850"/>
        <end position="879"/>
    </location>
</feature>
<feature type="compositionally biased region" description="Basic and acidic residues" evidence="5">
    <location>
        <begin position="895"/>
        <end position="905"/>
    </location>
</feature>
<feature type="modified residue" description="N-acetylmethionine" evidence="3">
    <location>
        <position position="1"/>
    </location>
</feature>
<feature type="modified residue" description="Citrulline" evidence="1">
    <location>
        <position position="7"/>
    </location>
</feature>
<feature type="modified residue" description="N6-acetyllysine" evidence="3">
    <location>
        <position position="140"/>
    </location>
</feature>
<feature type="modified residue" description="Phosphothreonine" evidence="3">
    <location>
        <position position="220"/>
    </location>
</feature>
<feature type="modified residue" description="Phosphoserine" evidence="3">
    <location>
        <position position="227"/>
    </location>
</feature>
<feature type="modified residue" description="Phosphoserine" evidence="3">
    <location>
        <position position="234"/>
    </location>
</feature>
<feature type="modified residue" description="Phosphoserine" evidence="3">
    <location>
        <position position="240"/>
    </location>
</feature>
<feature type="modified residue" description="Phosphothreonine" evidence="3">
    <location>
        <position position="241"/>
    </location>
</feature>
<feature type="modified residue" description="Phosphoserine" evidence="3">
    <location>
        <position position="260"/>
    </location>
</feature>
<feature type="modified residue" description="Phosphoserine" evidence="3">
    <location>
        <position position="389"/>
    </location>
</feature>
<feature type="modified residue" description="Phosphoserine" evidence="3">
    <location>
        <position position="391"/>
    </location>
</feature>
<feature type="modified residue" description="Phosphoserine" evidence="3">
    <location>
        <position position="393"/>
    </location>
</feature>
<feature type="modified residue" description="Phosphoserine" evidence="3">
    <location>
        <position position="402"/>
    </location>
</feature>
<feature type="modified residue" description="Phosphothreonine" evidence="3">
    <location>
        <position position="406"/>
    </location>
</feature>
<feature type="modified residue" description="Phosphoserine" evidence="3">
    <location>
        <position position="414"/>
    </location>
</feature>
<feature type="modified residue" description="Phosphothreonine" evidence="3">
    <location>
        <position position="416"/>
    </location>
</feature>
<feature type="modified residue" description="Phosphoserine" evidence="3">
    <location>
        <position position="420"/>
    </location>
</feature>
<feature type="modified residue" description="Phosphoserine" evidence="3">
    <location>
        <position position="429"/>
    </location>
</feature>
<feature type="modified residue" description="Phosphoserine" evidence="3">
    <location>
        <position position="431"/>
    </location>
</feature>
<feature type="modified residue" description="Phosphoserine" evidence="3">
    <location>
        <position position="436"/>
    </location>
</feature>
<feature type="modified residue" description="Phosphoserine" evidence="3">
    <location>
        <position position="450"/>
    </location>
</feature>
<feature type="modified residue" description="Phosphoserine" evidence="3">
    <location>
        <position position="452"/>
    </location>
</feature>
<feature type="modified residue" description="Phosphoserine" evidence="3">
    <location>
        <position position="463"/>
    </location>
</feature>
<feature type="modified residue" description="Phosphoserine" evidence="3">
    <location>
        <position position="465"/>
    </location>
</feature>
<feature type="modified residue" description="Phosphoserine" evidence="3">
    <location>
        <position position="478"/>
    </location>
</feature>
<feature type="modified residue" description="Phosphoserine" evidence="3">
    <location>
        <position position="524"/>
    </location>
</feature>
<feature type="modified residue" description="Phosphoserine" evidence="3">
    <location>
        <position position="526"/>
    </location>
</feature>
<feature type="modified residue" description="Phosphoserine" evidence="3">
    <location>
        <position position="528"/>
    </location>
</feature>
<feature type="modified residue" description="Phosphoserine" evidence="3">
    <location>
        <position position="530"/>
    </location>
</feature>
<feature type="modified residue" description="Phosphoserine" evidence="3">
    <location>
        <position position="532"/>
    </location>
</feature>
<feature type="modified residue" description="Phosphoserine" evidence="3">
    <location>
        <position position="563"/>
    </location>
</feature>
<feature type="modified residue" description="Phosphoserine" evidence="3">
    <location>
        <position position="565"/>
    </location>
</feature>
<feature type="modified residue" description="Phosphothreonine" evidence="3">
    <location>
        <position position="569"/>
    </location>
</feature>
<feature type="modified residue" description="Phosphoserine" evidence="3">
    <location>
        <position position="574"/>
    </location>
</feature>
<feature type="modified residue" description="Phosphoserine" evidence="3">
    <location>
        <position position="576"/>
    </location>
</feature>
<feature type="modified residue" description="Phosphothreonine" evidence="3">
    <location>
        <position position="586"/>
    </location>
</feature>
<feature type="modified residue" description="Phosphothreonine" evidence="3">
    <location>
        <position position="588"/>
    </location>
</feature>
<feature type="modified residue" description="Phosphothreonine" evidence="3">
    <location>
        <position position="595"/>
    </location>
</feature>
<feature type="modified residue" description="Phosphoserine" evidence="3">
    <location>
        <position position="597"/>
    </location>
</feature>
<feature type="modified residue" description="Phosphotyrosine" evidence="3">
    <location>
        <position position="610"/>
    </location>
</feature>
<feature type="modified residue" description="Phosphoserine" evidence="3">
    <location>
        <position position="611"/>
    </location>
</feature>
<feature type="modified residue" description="Phosphoserine" evidence="3">
    <location>
        <position position="619"/>
    </location>
</feature>
<feature type="modified residue" description="Phosphoserine" evidence="3">
    <location>
        <position position="621"/>
    </location>
</feature>
<feature type="modified residue" description="Phosphothreonine" evidence="3">
    <location>
        <position position="628"/>
    </location>
</feature>
<feature type="modified residue" description="Phosphoserine" evidence="3">
    <location>
        <position position="630"/>
    </location>
</feature>
<feature type="modified residue" description="Phosphoserine" evidence="3">
    <location>
        <position position="640"/>
    </location>
</feature>
<feature type="modified residue" description="Phosphoserine" evidence="3">
    <location>
        <position position="642"/>
    </location>
</feature>
<feature type="modified residue" description="Phosphoserine" evidence="3">
    <location>
        <position position="650"/>
    </location>
</feature>
<feature type="modified residue" description="Phosphoserine" evidence="3">
    <location>
        <position position="652"/>
    </location>
</feature>
<feature type="modified residue" description="Phosphoserine" evidence="2">
    <location>
        <position position="708"/>
    </location>
</feature>
<feature type="modified residue" description="Phosphoserine" evidence="3">
    <location>
        <position position="709"/>
    </location>
</feature>
<feature type="modified residue" description="Phosphoserine" evidence="3">
    <location>
        <position position="718"/>
    </location>
</feature>
<feature type="modified residue" description="Phosphoserine" evidence="3">
    <location>
        <position position="720"/>
    </location>
</feature>
<feature type="modified residue" description="Phosphoserine" evidence="3">
    <location>
        <position position="726"/>
    </location>
</feature>
<feature type="modified residue" description="Phosphoserine" evidence="3">
    <location>
        <position position="728"/>
    </location>
</feature>
<feature type="modified residue" description="Phosphothreonine" evidence="3">
    <location>
        <position position="731"/>
    </location>
</feature>
<feature type="modified residue" description="Phosphoserine" evidence="3">
    <location>
        <position position="751"/>
    </location>
</feature>
<feature type="modified residue" description="Phosphoserine" evidence="3">
    <location>
        <position position="753"/>
    </location>
</feature>
<feature type="modified residue" description="Phosphoserine" evidence="3">
    <location>
        <position position="761"/>
    </location>
</feature>
<feature type="modified residue" description="Phosphoserine" evidence="3">
    <location>
        <position position="765"/>
    </location>
</feature>
<feature type="modified residue" description="Phosphoserine" evidence="3">
    <location>
        <position position="767"/>
    </location>
</feature>
<feature type="modified residue" description="Phosphoserine" evidence="3">
    <location>
        <position position="769"/>
    </location>
</feature>
<feature type="modified residue" description="Phosphoserine" evidence="3">
    <location>
        <position position="782"/>
    </location>
</feature>
<feature type="modified residue" description="Phosphoserine" evidence="3">
    <location>
        <position position="786"/>
    </location>
</feature>
<feature type="modified residue" description="Phosphoserine" evidence="3">
    <location>
        <position position="788"/>
    </location>
</feature>
<feature type="modified residue" description="Phosphoserine" evidence="3">
    <location>
        <position position="790"/>
    </location>
</feature>
<feature type="modified residue" description="Phosphothreonine" evidence="2">
    <location>
        <position position="791"/>
    </location>
</feature>
<feature type="modified residue" description="Phosphoserine" evidence="3">
    <location>
        <position position="794"/>
    </location>
</feature>
<feature type="modified residue" description="Phosphoserine" evidence="3">
    <location>
        <position position="804"/>
    </location>
</feature>
<feature type="modified residue" description="Phosphothreonine" evidence="3">
    <location>
        <position position="806"/>
    </location>
</feature>
<feature type="modified residue" description="Phosphoserine" evidence="3">
    <location>
        <position position="808"/>
    </location>
</feature>
<feature type="modified residue" description="Phosphoserine" evidence="3">
    <location>
        <position position="810"/>
    </location>
</feature>
<feature type="modified residue" description="Phosphoserine" evidence="3">
    <location>
        <position position="815"/>
    </location>
</feature>
<feature type="modified residue" description="Phosphothreonine" evidence="3">
    <location>
        <position position="885"/>
    </location>
</feature>
<feature type="modified residue" description="Phosphoserine" evidence="3">
    <location>
        <position position="887"/>
    </location>
</feature>
<feature type="modified residue" description="Phosphoserine" evidence="3">
    <location>
        <position position="914"/>
    </location>
</feature>
<feature type="cross-link" description="Glycyl lysine isopeptide (Lys-Gly) (interchain with G-Cter in SUMO2)" evidence="3">
    <location>
        <position position="127"/>
    </location>
</feature>
<feature type="cross-link" description="Glycyl lysine isopeptide (Lys-Gly) (interchain with G-Cter in SUMO1); alternate" evidence="3">
    <location>
        <position position="231"/>
    </location>
</feature>
<feature type="cross-link" description="Glycyl lysine isopeptide (Lys-Gly) (interchain with G-Cter in SUMO2); alternate" evidence="3">
    <location>
        <position position="231"/>
    </location>
</feature>
<feature type="cross-link" description="Glycyl lysine isopeptide (Lys-Gly) (interchain with G-Cter in SUMO2)" evidence="3">
    <location>
        <position position="249"/>
    </location>
</feature>
<feature type="cross-link" description="Glycyl lysine isopeptide (Lys-Gly) (interchain with G-Cter in SUMO2)" evidence="3">
    <location>
        <position position="447"/>
    </location>
</feature>
<feature type="cross-link" description="Glycyl lysine isopeptide (Lys-Gly) (interchain with G-Cter in SUMO2)" evidence="3">
    <location>
        <position position="459"/>
    </location>
</feature>
<feature type="cross-link" description="Glycyl lysine isopeptide (Lys-Gly) (interchain with G-Cter in SUMO2)" evidence="3">
    <location>
        <position position="472"/>
    </location>
</feature>
<feature type="cross-link" description="Glycyl lysine isopeptide (Lys-Gly) (interchain with G-Cter in SUMO2)" evidence="3">
    <location>
        <position position="882"/>
    </location>
</feature>
<sequence>MDAGFFRGTSAEQDNRFSNKQKKLLKQLKFAECLEKKVDMSKVNLEVIKPWITKRVTEILGFEDDVVIEFIFNQLEVKNPDSKMMQINLTGFLNGKNAREFMGELWPLLLSAQENIAGIPSAFLELKKEEIKQRQIEQEKLASMKKQDEDKDKRDKEEKESSREKRERSRSPRRRKSRSPSPRRRSSPVRRERKRSHSRSPRHRTKSRSPSPAPEKKEKTPELPEPSVKVKEPSVQEATSTSDILKVPKPEPIPEPKEPSPEKNSKKEKEKEKTRPRSRSRSKSRSRTRSRSPSHTRPRRRHRSRSRSYSPRRRPSPRRRPSPRRRTPPRRMPPPPRHRRSRSPVRRRRRSSASLSGSSSSSSSSRSRSPPKKPPKRTSSPPRKTRRLSPSASPPRRRHRPSPPATPPPKTRHSPTPQQSNRTRKSRVSVSPGRTSGKVTKHKGTEKRESPSPAPKPRKVELSESEEDKGGKMAAADSVQQRRQYRRQNQQSSSDSGSSSSSEDERPKRSHVKNGEVGRRRRHSPSRSASPSPRKRQKETSPRMQMGKRWQSPVTKSGRRRRSPSPPPTRRRRSPSPAPPPRRRRTPTPPPRRRTPSPPPRRRSPSPRRYSPPIQRRYSPSPPPKRRTASPPPPPKRRASPSPPPKRRVSHSPPPKQRSSPVTKRRSPSLSSKHRKGSSPSRSTREARSPQPNKRHSPSPRPRAPQTSSPPPVRRGASSSPQRRQSPSPSTRPIRRVSRTPEPKKIKKAASPSPQSVRRVSSSRSVSGSPEPAAKKPPAPTSPVQSQSPSTNWSPAVPVKKAKSPTPSPSPPRNSDQEGGGKKKKKKKDKKHKKDKKHKKHKKHKKEKAVAAAAAAAVTPAAIAAATTTLAQEEPVAAPEPKKETESEAEDNLDDLEKHLREKALRSMRKAQVSPQS</sequence>
<reference key="1">
    <citation type="submission" date="2004-11" db="EMBL/GenBank/DDBJ databases">
        <authorList>
            <consortium name="The German cDNA consortium"/>
        </authorList>
    </citation>
    <scope>NUCLEOTIDE SEQUENCE [LARGE SCALE MRNA]</scope>
    <source>
        <tissue>Brain cortex</tissue>
    </source>
</reference>
<comment type="function">
    <text evidence="3">Part of pre- and post-splicing multiprotein mRNP complexes. As a component of the minor spliceosome, involved in the splicing of U12-type introns in pre-mRNAs (By similarity). Involved in numerous pre-mRNA processing events. Promotes constitutive and exonic splicing enhancer (ESE)-dependent splicing activation by bridging together sequence-specific (SR family proteins, SFRS4, SFRS5 and TRA2B/SFRS10) and basal snRNP (SNRP70 and SNRPA1) factors of the spliceosome. Stimulates mRNA 3'-end cleavage independently of the formation of an exon junction complex. Binds both pre-mRNA and spliced mRNA 20-25 nt upstream of exon-exon junctions. Binds RNA and DNA with low sequence specificity and has similar preference for either double- or single-stranded nucleic acid substrates.</text>
</comment>
<comment type="subunit">
    <text evidence="3">Identified in the spliceosome C complex. Found in a pre-mRNA splicing complex with SFRS4, SFRS5, SNRP70, SNRPA1, SRRM1 and SRRM2. Component of the minor spliceosome, which splices U12-type introns (By similarity). Found in a pre-mRNA exonic splicing enhancer (ESE) complex with SNRP70, SNRPA1, SRRM1 and TRA2B/SFRS10. Found in a mRNA splicing-dependent exon junction complex (EJC) with DEK, PRPF8, NCBP1, RBM8A, RNPS1, SRRM1 and ALYREF/THOC4. Interacts with DDX39B, CPSF1, RBM8A, RNPS1, and ALYREF/THOC4. Seems to be a compound of RNA export complexes that are released from speckles in a ATP-dependent manner.</text>
</comment>
<comment type="PTM">
    <text evidence="3">Phosphorylated on multiple serine and threonine residues by DYRK3 during the G2-to-M transition, after the nuclear-envelope breakdown. Phosphorylation by DYRK3 promotes disassembly of nuclear speckles.</text>
</comment>
<comment type="PTM">
    <text evidence="2">Citrullinated by PADI4.</text>
</comment>
<comment type="similarity">
    <text evidence="6">Belongs to the splicing factor SR family.</text>
</comment>
<gene>
    <name type="primary">SRRM1</name>
</gene>
<dbReference type="EMBL" id="CR860804">
    <property type="protein sequence ID" value="CAH92914.1"/>
    <property type="molecule type" value="mRNA"/>
</dbReference>
<dbReference type="RefSeq" id="NP_001126712.1">
    <property type="nucleotide sequence ID" value="NM_001133240.1"/>
</dbReference>
<dbReference type="BMRB" id="Q5R5Q2"/>
<dbReference type="SMR" id="Q5R5Q2"/>
<dbReference type="FunCoup" id="Q5R5Q2">
    <property type="interactions" value="3857"/>
</dbReference>
<dbReference type="STRING" id="9601.ENSPPYP00000001983"/>
<dbReference type="GeneID" id="100173713"/>
<dbReference type="KEGG" id="pon:100173713"/>
<dbReference type="CTD" id="10250"/>
<dbReference type="eggNOG" id="KOG2146">
    <property type="taxonomic scope" value="Eukaryota"/>
</dbReference>
<dbReference type="InParanoid" id="Q5R5Q2"/>
<dbReference type="OrthoDB" id="163257at2759"/>
<dbReference type="Proteomes" id="UP000001595">
    <property type="component" value="Unplaced"/>
</dbReference>
<dbReference type="GO" id="GO:0005681">
    <property type="term" value="C:spliceosomal complex"/>
    <property type="evidence" value="ECO:0007669"/>
    <property type="project" value="UniProtKB-KW"/>
</dbReference>
<dbReference type="GO" id="GO:0003677">
    <property type="term" value="F:DNA binding"/>
    <property type="evidence" value="ECO:0007669"/>
    <property type="project" value="UniProtKB-KW"/>
</dbReference>
<dbReference type="GO" id="GO:0003723">
    <property type="term" value="F:RNA binding"/>
    <property type="evidence" value="ECO:0007669"/>
    <property type="project" value="UniProtKB-KW"/>
</dbReference>
<dbReference type="GO" id="GO:0006397">
    <property type="term" value="P:mRNA processing"/>
    <property type="evidence" value="ECO:0007669"/>
    <property type="project" value="UniProtKB-KW"/>
</dbReference>
<dbReference type="GO" id="GO:0048024">
    <property type="term" value="P:regulation of mRNA splicing, via spliceosome"/>
    <property type="evidence" value="ECO:0007669"/>
    <property type="project" value="TreeGrafter"/>
</dbReference>
<dbReference type="GO" id="GO:0008380">
    <property type="term" value="P:RNA splicing"/>
    <property type="evidence" value="ECO:0007669"/>
    <property type="project" value="UniProtKB-KW"/>
</dbReference>
<dbReference type="FunFam" id="1.20.1390.10:FF:000002">
    <property type="entry name" value="Serine/arginine repetitive matrix 1 isoform 2"/>
    <property type="match status" value="1"/>
</dbReference>
<dbReference type="Gene3D" id="1.20.1390.10">
    <property type="entry name" value="PWI domain"/>
    <property type="match status" value="1"/>
</dbReference>
<dbReference type="InterPro" id="IPR002483">
    <property type="entry name" value="PWI_dom"/>
</dbReference>
<dbReference type="InterPro" id="IPR036483">
    <property type="entry name" value="PWI_dom_sf"/>
</dbReference>
<dbReference type="InterPro" id="IPR052225">
    <property type="entry name" value="Ser/Arg_repetitive_matrix"/>
</dbReference>
<dbReference type="PANTHER" id="PTHR23148">
    <property type="entry name" value="SERINE/ARGININE REGULATED NUCLEAR MATRIX PROTEIN"/>
    <property type="match status" value="1"/>
</dbReference>
<dbReference type="PANTHER" id="PTHR23148:SF0">
    <property type="entry name" value="SERINE_ARGININE REPETITIVE MATRIX PROTEIN 1"/>
    <property type="match status" value="1"/>
</dbReference>
<dbReference type="Pfam" id="PF01480">
    <property type="entry name" value="PWI"/>
    <property type="match status" value="1"/>
</dbReference>
<dbReference type="SMART" id="SM00311">
    <property type="entry name" value="PWI"/>
    <property type="match status" value="1"/>
</dbReference>
<dbReference type="SUPFAM" id="SSF101233">
    <property type="entry name" value="PWI domain"/>
    <property type="match status" value="1"/>
</dbReference>
<dbReference type="PROSITE" id="PS51025">
    <property type="entry name" value="PWI"/>
    <property type="match status" value="1"/>
</dbReference>
<evidence type="ECO:0000250" key="1"/>
<evidence type="ECO:0000250" key="2">
    <source>
        <dbReference type="UniProtKB" id="Q52KI8"/>
    </source>
</evidence>
<evidence type="ECO:0000250" key="3">
    <source>
        <dbReference type="UniProtKB" id="Q8IYB3"/>
    </source>
</evidence>
<evidence type="ECO:0000255" key="4">
    <source>
        <dbReference type="PROSITE-ProRule" id="PRU00627"/>
    </source>
</evidence>
<evidence type="ECO:0000256" key="5">
    <source>
        <dbReference type="SAM" id="MobiDB-lite"/>
    </source>
</evidence>
<evidence type="ECO:0000305" key="6"/>